<comment type="function">
    <text evidence="3">Involved in the transport of alpha-galactosides. Required for the utilization of raffinose and melibiose. Probably acts as a periplasmic substrate-binding protein for a transport system.</text>
</comment>
<comment type="subcellular location">
    <subcellularLocation>
        <location evidence="3">Periplasm</location>
    </subcellularLocation>
</comment>
<comment type="induction">
    <text evidence="2 3">Induced by melibiose, raffinose, galactose, galactosamine, dulcitol and stachyose (PubMed:17101990, PubMed:9791127). Expression is down-regulated by succinate and glucose, and by SyrA (PubMed:9791127).</text>
</comment>
<comment type="disruption phenotype">
    <text evidence="3">Disruption mutant is unable to use melibiose and raffinose as carbon sources but it can use glucose and galactose.</text>
</comment>
<comment type="similarity">
    <text evidence="5">Belongs to the bacterial solute-binding protein 5 family.</text>
</comment>
<organism>
    <name type="scientific">Rhizobium meliloti (strain 1021)</name>
    <name type="common">Ensifer meliloti</name>
    <name type="synonym">Sinorhizobium meliloti</name>
    <dbReference type="NCBI Taxonomy" id="266834"/>
    <lineage>
        <taxon>Bacteria</taxon>
        <taxon>Pseudomonadati</taxon>
        <taxon>Pseudomonadota</taxon>
        <taxon>Alphaproteobacteria</taxon>
        <taxon>Hyphomicrobiales</taxon>
        <taxon>Rhizobiaceae</taxon>
        <taxon>Sinorhizobium/Ensifer group</taxon>
        <taxon>Sinorhizobium</taxon>
    </lineage>
</organism>
<proteinExistence type="evidence at transcript level"/>
<accession>Q9X4Y1</accession>
<protein>
    <recommendedName>
        <fullName evidence="5">Periplasmic alpha-galactoside-binding protein</fullName>
    </recommendedName>
    <alternativeName>
        <fullName evidence="4">Alpha-galactoside permease</fullName>
    </alternativeName>
</protein>
<reference key="1">
    <citation type="journal article" date="1998" name="J. Bacteriol.">
        <title>Alpha-galactoside uptake in Rhizobium meliloti: isolation and characterization of agpA, a gene encoding a periplasmic binding protein required for melibiose and raffinose utilization.</title>
        <authorList>
            <person name="Gage D.J."/>
            <person name="Long S.R."/>
        </authorList>
    </citation>
    <scope>NUCLEOTIDE SEQUENCE [GENOMIC DNA]</scope>
    <scope>FUNCTION</scope>
    <scope>SUBCELLULAR LOCATION</scope>
    <scope>INDUCTION</scope>
    <scope>DISRUPTION PHENOTYPE</scope>
    <source>
        <strain>1021</strain>
    </source>
</reference>
<reference key="2">
    <citation type="journal article" date="2001" name="Proc. Natl. Acad. Sci. U.S.A.">
        <title>The complete sequence of the 1,683-kb pSymB megaplasmid from the N2-fixing endosymbiont Sinorhizobium meliloti.</title>
        <authorList>
            <person name="Finan T.M."/>
            <person name="Weidner S."/>
            <person name="Wong K."/>
            <person name="Buhrmester J."/>
            <person name="Chain P."/>
            <person name="Vorhoelter F.J."/>
            <person name="Hernandez-Lucas I."/>
            <person name="Becker A."/>
            <person name="Cowie A."/>
            <person name="Gouzy J."/>
            <person name="Golding B."/>
            <person name="Puehler A."/>
        </authorList>
    </citation>
    <scope>NUCLEOTIDE SEQUENCE [LARGE SCALE GENOMIC DNA]</scope>
    <source>
        <strain>1021</strain>
    </source>
</reference>
<reference key="3">
    <citation type="journal article" date="2001" name="Science">
        <title>The composite genome of the legume symbiont Sinorhizobium meliloti.</title>
        <authorList>
            <person name="Galibert F."/>
            <person name="Finan T.M."/>
            <person name="Long S.R."/>
            <person name="Puehler A."/>
            <person name="Abola P."/>
            <person name="Ampe F."/>
            <person name="Barloy-Hubler F."/>
            <person name="Barnett M.J."/>
            <person name="Becker A."/>
            <person name="Boistard P."/>
            <person name="Bothe G."/>
            <person name="Boutry M."/>
            <person name="Bowser L."/>
            <person name="Buhrmester J."/>
            <person name="Cadieu E."/>
            <person name="Capela D."/>
            <person name="Chain P."/>
            <person name="Cowie A."/>
            <person name="Davis R.W."/>
            <person name="Dreano S."/>
            <person name="Federspiel N.A."/>
            <person name="Fisher R.F."/>
            <person name="Gloux S."/>
            <person name="Godrie T."/>
            <person name="Goffeau A."/>
            <person name="Golding B."/>
            <person name="Gouzy J."/>
            <person name="Gurjal M."/>
            <person name="Hernandez-Lucas I."/>
            <person name="Hong A."/>
            <person name="Huizar L."/>
            <person name="Hyman R.W."/>
            <person name="Jones T."/>
            <person name="Kahn D."/>
            <person name="Kahn M.L."/>
            <person name="Kalman S."/>
            <person name="Keating D.H."/>
            <person name="Kiss E."/>
            <person name="Komp C."/>
            <person name="Lelaure V."/>
            <person name="Masuy D."/>
            <person name="Palm C."/>
            <person name="Peck M.C."/>
            <person name="Pohl T.M."/>
            <person name="Portetelle D."/>
            <person name="Purnelle B."/>
            <person name="Ramsperger U."/>
            <person name="Surzycki R."/>
            <person name="Thebault P."/>
            <person name="Vandenbol M."/>
            <person name="Vorhoelter F.J."/>
            <person name="Weidner S."/>
            <person name="Wells D.H."/>
            <person name="Wong K."/>
            <person name="Yeh K.-C."/>
            <person name="Batut J."/>
        </authorList>
    </citation>
    <scope>NUCLEOTIDE SEQUENCE [LARGE SCALE GENOMIC DNA]</scope>
    <source>
        <strain>1021</strain>
    </source>
</reference>
<reference key="4">
    <citation type="journal article" date="2006" name="Proc. Natl. Acad. Sci. U.S.A.">
        <title>Mapping the Sinorhizobium meliloti 1021 solute-binding protein-dependent transportome.</title>
        <authorList>
            <person name="Mauchline T.H."/>
            <person name="Fowler J.E."/>
            <person name="East A.K."/>
            <person name="Sartor A.L."/>
            <person name="Zaheer R."/>
            <person name="Hosie A.H."/>
            <person name="Poole P.S."/>
            <person name="Finan T.M."/>
        </authorList>
    </citation>
    <scope>INDUCTION</scope>
</reference>
<sequence>MKTHRLNMTASLLIGISAFAVQAFASEPTVVPEQPPFPAQGKITYVSRDSILEFKALREYREPEWVTEKFVKAGKLPPVAERLPKEPMVFKAGNMPDGMGVYGDVMRHVIGGRPEGWNYSAGQTQGWGGIDIGMFECLTRTAPLFQVEADDMEPLPNLAKSWDWSEDGRKLTMHLIEGAKWSDGDPFDADDVMFYWEDNVLDSSVSPLNGATPETFGEGTTLKKIDQYTVEWTFKEAFPRQHLFAMAYGTFCPGPSHILKTKHPKYAGTTYNEYKNGFPAEYMNLPVMGAWVPVAYRPDDIIVLRRNPYYWKVDEAGNQLPYLNELHYKLSTWADRDVQAIAGSGDISNLEQPENFVESLKRAANESAPARLAFGPRVIGYNMHMNFSGNGWGDPDERAKAVRELNRNLDFRKAVTMAVDRKKLGEALVKGPFTAIYPGGLSSGTSFYDRNSTIYYPHDLEGAKVLLEKVGLKDTDGNGFVNFPAGKLGGRDVEIVLLVNSDYSTDRNLAEGMVGQMEKLGLRVVLNALDGKQRDAANYAGRFDWMIHRNTAEFASVVQNTPQLAPTGPRTSWHHRAPEGGEVDVMPHEQELVDIVNKFIASNDNDERTELMKQYQKVATTNVDTVGLTEYPGALIINKRFSNIPPGAPIFMFNWAEDTIIRERVFVAADKQGDYELYPEQLPGKPGESGPIN</sequence>
<dbReference type="EMBL" id="AF119834">
    <property type="protein sequence ID" value="AAD26274.1"/>
    <property type="molecule type" value="Genomic_DNA"/>
</dbReference>
<dbReference type="EMBL" id="AL591985">
    <property type="protein sequence ID" value="CAC49966.1"/>
    <property type="molecule type" value="Genomic_DNA"/>
</dbReference>
<dbReference type="PIR" id="F96037">
    <property type="entry name" value="F96037"/>
</dbReference>
<dbReference type="RefSeq" id="NP_438106.1">
    <property type="nucleotide sequence ID" value="NC_003078.1"/>
</dbReference>
<dbReference type="RefSeq" id="WP_010976339.1">
    <property type="nucleotide sequence ID" value="NC_003078.1"/>
</dbReference>
<dbReference type="SMR" id="Q9X4Y1"/>
<dbReference type="TCDB" id="3.A.1.5.7">
    <property type="family name" value="the atp-binding cassette (abc) superfamily"/>
</dbReference>
<dbReference type="EnsemblBacteria" id="CAC49966">
    <property type="protein sequence ID" value="CAC49966"/>
    <property type="gene ID" value="SM_b21647"/>
</dbReference>
<dbReference type="KEGG" id="sme:SM_b21647"/>
<dbReference type="PATRIC" id="fig|266834.11.peg.6492"/>
<dbReference type="eggNOG" id="COG0747">
    <property type="taxonomic scope" value="Bacteria"/>
</dbReference>
<dbReference type="HOGENOM" id="CLU_017028_8_2_5"/>
<dbReference type="OrthoDB" id="9803988at2"/>
<dbReference type="Proteomes" id="UP000001976">
    <property type="component" value="Plasmid pSymB"/>
</dbReference>
<dbReference type="GO" id="GO:0043190">
    <property type="term" value="C:ATP-binding cassette (ABC) transporter complex"/>
    <property type="evidence" value="ECO:0007669"/>
    <property type="project" value="InterPro"/>
</dbReference>
<dbReference type="GO" id="GO:0030288">
    <property type="term" value="C:outer membrane-bounded periplasmic space"/>
    <property type="evidence" value="ECO:0007669"/>
    <property type="project" value="UniProtKB-ARBA"/>
</dbReference>
<dbReference type="GO" id="GO:1904680">
    <property type="term" value="F:peptide transmembrane transporter activity"/>
    <property type="evidence" value="ECO:0007669"/>
    <property type="project" value="TreeGrafter"/>
</dbReference>
<dbReference type="GO" id="GO:0015833">
    <property type="term" value="P:peptide transport"/>
    <property type="evidence" value="ECO:0007669"/>
    <property type="project" value="TreeGrafter"/>
</dbReference>
<dbReference type="CDD" id="cd08500">
    <property type="entry name" value="PBP2_NikA_DppA_OppA_like_4"/>
    <property type="match status" value="1"/>
</dbReference>
<dbReference type="Gene3D" id="3.10.105.10">
    <property type="entry name" value="Dipeptide-binding Protein, Domain 3"/>
    <property type="match status" value="1"/>
</dbReference>
<dbReference type="Gene3D" id="3.40.190.10">
    <property type="entry name" value="Periplasmic binding protein-like II"/>
    <property type="match status" value="1"/>
</dbReference>
<dbReference type="InterPro" id="IPR030678">
    <property type="entry name" value="Peptide/Ni-bd"/>
</dbReference>
<dbReference type="InterPro" id="IPR039424">
    <property type="entry name" value="SBP_5"/>
</dbReference>
<dbReference type="InterPro" id="IPR000914">
    <property type="entry name" value="SBP_5_dom"/>
</dbReference>
<dbReference type="PANTHER" id="PTHR30290:SF62">
    <property type="entry name" value="OLIGOPEPTIDE ABC TRANSPORTER, PERIPLASMIC OLIGOPEPTIDE-BINDING PROTEIN"/>
    <property type="match status" value="1"/>
</dbReference>
<dbReference type="PANTHER" id="PTHR30290">
    <property type="entry name" value="PERIPLASMIC BINDING COMPONENT OF ABC TRANSPORTER"/>
    <property type="match status" value="1"/>
</dbReference>
<dbReference type="Pfam" id="PF00496">
    <property type="entry name" value="SBP_bac_5"/>
    <property type="match status" value="1"/>
</dbReference>
<dbReference type="PIRSF" id="PIRSF002741">
    <property type="entry name" value="MppA"/>
    <property type="match status" value="1"/>
</dbReference>
<dbReference type="SUPFAM" id="SSF53850">
    <property type="entry name" value="Periplasmic binding protein-like II"/>
    <property type="match status" value="1"/>
</dbReference>
<evidence type="ECO:0000255" key="1"/>
<evidence type="ECO:0000269" key="2">
    <source>
    </source>
</evidence>
<evidence type="ECO:0000269" key="3">
    <source>
    </source>
</evidence>
<evidence type="ECO:0000303" key="4">
    <source>
    </source>
</evidence>
<evidence type="ECO:0000305" key="5"/>
<name>AGPA_RHIME</name>
<feature type="signal peptide" evidence="1">
    <location>
        <begin position="1"/>
        <end position="20"/>
    </location>
</feature>
<feature type="chain" id="PRO_0000031783" description="Periplasmic alpha-galactoside-binding protein">
    <location>
        <begin position="21"/>
        <end position="693"/>
    </location>
</feature>
<feature type="sequence conflict" description="In Ref. 1; AAD26274." evidence="5" ref="1">
    <original>E</original>
    <variation>K</variation>
    <location>
        <position position="397"/>
    </location>
</feature>
<keyword id="KW-0574">Periplasm</keyword>
<keyword id="KW-0614">Plasmid</keyword>
<keyword id="KW-1185">Reference proteome</keyword>
<keyword id="KW-0732">Signal</keyword>
<keyword id="KW-0762">Sugar transport</keyword>
<keyword id="KW-0813">Transport</keyword>
<gene>
    <name evidence="4" type="primary">agpA</name>
    <name type="ordered locus">RB1567</name>
    <name type="ORF">SMb21647</name>
</gene>
<geneLocation type="plasmid">
    <name>pSymB</name>
    <name>megaplasmid 2</name>
</geneLocation>